<protein>
    <recommendedName>
        <fullName>Fimbria A protein</fullName>
    </recommendedName>
</protein>
<sequence length="174" mass="17771">MKLNKIMLATVLAFGVSSLANAADQGHGKVTFTGSIIDAPCSIAPESADQTVEMGQISNVALKNGGKSAPRQFDIKLEQCDTSTLKTVTTTFDGKASAANPDLLGIIGTASGASIAITDMASNPIKLGTATAPQTLNDGNNTLRFAAYLQGDGASATVVPGDFTAVADFKLAYQ</sequence>
<comment type="function">
    <text>Major structural component of mannose-resistant fimbriae of Serratia marcescens.</text>
</comment>
<comment type="subcellular location">
    <subcellularLocation>
        <location>Fimbrium</location>
    </subcellularLocation>
</comment>
<comment type="similarity">
    <text evidence="2">Belongs to the fimbrial protein family.</text>
</comment>
<proteinExistence type="evidence at protein level"/>
<gene>
    <name type="primary">smfA</name>
</gene>
<keyword id="KW-0903">Direct protein sequencing</keyword>
<keyword id="KW-1015">Disulfide bond</keyword>
<keyword id="KW-0281">Fimbrium</keyword>
<keyword id="KW-0732">Signal</keyword>
<organism>
    <name type="scientific">Serratia marcescens</name>
    <dbReference type="NCBI Taxonomy" id="615"/>
    <lineage>
        <taxon>Bacteria</taxon>
        <taxon>Pseudomonadati</taxon>
        <taxon>Pseudomonadota</taxon>
        <taxon>Gammaproteobacteria</taxon>
        <taxon>Enterobacterales</taxon>
        <taxon>Yersiniaceae</taxon>
        <taxon>Serratia</taxon>
    </lineage>
</organism>
<dbReference type="EMBL" id="M21161">
    <property type="protein sequence ID" value="AAA26576.1"/>
    <property type="molecule type" value="Genomic_DNA"/>
</dbReference>
<dbReference type="PIR" id="A31096">
    <property type="entry name" value="A31096"/>
</dbReference>
<dbReference type="RefSeq" id="WP_033653555.1">
    <property type="nucleotide sequence ID" value="NZ_VWTD01000012.1"/>
</dbReference>
<dbReference type="SMR" id="P13421"/>
<dbReference type="STRING" id="273526.SMDB11_0909"/>
<dbReference type="GO" id="GO:0009289">
    <property type="term" value="C:pilus"/>
    <property type="evidence" value="ECO:0007669"/>
    <property type="project" value="UniProtKB-SubCell"/>
</dbReference>
<dbReference type="GO" id="GO:0043709">
    <property type="term" value="P:cell adhesion involved in single-species biofilm formation"/>
    <property type="evidence" value="ECO:0007669"/>
    <property type="project" value="TreeGrafter"/>
</dbReference>
<dbReference type="Gene3D" id="2.60.40.1090">
    <property type="entry name" value="Fimbrial-type adhesion domain"/>
    <property type="match status" value="1"/>
</dbReference>
<dbReference type="InterPro" id="IPR000259">
    <property type="entry name" value="Adhesion_dom_fimbrial"/>
</dbReference>
<dbReference type="InterPro" id="IPR036937">
    <property type="entry name" value="Adhesion_dom_fimbrial_sf"/>
</dbReference>
<dbReference type="InterPro" id="IPR008966">
    <property type="entry name" value="Adhesion_dom_sf"/>
</dbReference>
<dbReference type="InterPro" id="IPR050263">
    <property type="entry name" value="Bact_Fimbrial_Adh_Pro"/>
</dbReference>
<dbReference type="PANTHER" id="PTHR33420:SF26">
    <property type="entry name" value="FIMBRIAL SUBUNIT"/>
    <property type="match status" value="1"/>
</dbReference>
<dbReference type="PANTHER" id="PTHR33420">
    <property type="entry name" value="FIMBRIAL SUBUNIT ELFA-RELATED"/>
    <property type="match status" value="1"/>
</dbReference>
<dbReference type="Pfam" id="PF00419">
    <property type="entry name" value="Fimbrial"/>
    <property type="match status" value="1"/>
</dbReference>
<dbReference type="SUPFAM" id="SSF49401">
    <property type="entry name" value="Bacterial adhesins"/>
    <property type="match status" value="1"/>
</dbReference>
<reference key="1">
    <citation type="journal article" date="1988" name="J. Bacteriol.">
        <title>Cloning and sequence of the gene encoding the major structural component of mannose-resistant fimbriae of Serratia marcescens.</title>
        <authorList>
            <person name="Mizunoe Y."/>
            <person name="Nakabeppu Y."/>
            <person name="Sekiguchi M."/>
            <person name="Kawabata S."/>
            <person name="Moriya T."/>
            <person name="Amako K."/>
        </authorList>
    </citation>
    <scope>NUCLEOTIDE SEQUENCE [GENOMIC DNA]</scope>
    <scope>PROTEIN SEQUENCE OF 23-37</scope>
    <source>
        <strain>US46</strain>
    </source>
</reference>
<feature type="signal peptide" evidence="1">
    <location>
        <begin position="1"/>
        <end position="22"/>
    </location>
</feature>
<feature type="chain" id="PRO_0000009236" description="Fimbria A protein">
    <location>
        <begin position="23"/>
        <end position="174"/>
    </location>
</feature>
<feature type="disulfide bond" evidence="2">
    <location>
        <begin position="41"/>
        <end position="80"/>
    </location>
</feature>
<evidence type="ECO:0000269" key="1">
    <source>
    </source>
</evidence>
<evidence type="ECO:0000305" key="2"/>
<name>FMA_SERMA</name>
<accession>P13421</accession>